<comment type="function">
    <text evidence="1 8 16">Functions in lipid transport from the endoplasmic reticulum and is involved in a wide array of cellular functions probably through regulation of the biogenesis of lipid microdomains at the plasma membrane. Involved in the regulation of different receptors it plays a role in BDNF signaling and EGF signaling. Also regulates ion channels like the potassium channel and could modulate neurotransmitter release. Plays a role in calcium signaling through modulation together with ANK2 of the ITP3R-dependent calcium efflux at the endoplasmic reticulum. Plays a role in several other cell functions including proliferation, survival and death. Originally identified for its ability to bind various psychoactive drugs it is involved in learning processes, memory and mood alteration (PubMed:16472803, PubMed:9341151). Necessary for proper mitochondrial axonal transport in motor neurons, in particular the retrograde movement of mitochondria. Plays a role in protecting cells against oxidative stress-induced cell death via its interaction with RNF112 (By similarity).</text>
</comment>
<comment type="subunit">
    <text evidence="1 3 13">Homotrimer (PubMed:27042935). Forms a ternary complex with ANK2 and ITPR3. The complex is disrupted by agonists. Interacts with KCNA4. Interacts with KCNA2; cocaine consumption leads to increased interaction. Interacts with RNF112 in an oxidative stress-regulated manner (By similarity).</text>
</comment>
<comment type="interaction">
    <interactant intactId="EBI-3248663">
        <id>Q99720</id>
    </interactant>
    <interactant intactId="EBI-21459171">
        <id>Q92847-1</id>
        <label>GHSR</label>
    </interactant>
    <organismsDiffer>false</organismsDiffer>
    <experiments>8</experiments>
</comment>
<comment type="interaction">
    <interactant intactId="EBI-16203475">
        <id>Q99720-1</id>
    </interactant>
    <interactant intactId="EBI-16203475">
        <id>Q99720-1</id>
        <label>SIGMAR1</label>
    </interactant>
    <organismsDiffer>false</organismsDiffer>
    <experiments>5</experiments>
</comment>
<comment type="interaction">
    <interactant intactId="EBI-25831036">
        <id>Q99720-4</id>
    </interactant>
    <interactant intactId="EBI-13307975">
        <id>O00213-2</id>
        <label>APBB1</label>
    </interactant>
    <organismsDiffer>false</organismsDiffer>
    <experiments>3</experiments>
</comment>
<comment type="interaction">
    <interactant intactId="EBI-25831036">
        <id>Q99720-4</id>
    </interactant>
    <interactant intactId="EBI-476586">
        <id>P17612</id>
        <label>PRKACA</label>
    </interactant>
    <organismsDiffer>false</organismsDiffer>
    <experiments>3</experiments>
</comment>
<comment type="interaction">
    <interactant intactId="EBI-25831036">
        <id>Q99720-4</id>
    </interactant>
    <interactant intactId="EBI-350723">
        <id>P50454</id>
        <label>SERPINH1</label>
    </interactant>
    <organismsDiffer>false</organismsDiffer>
    <experiments>3</experiments>
</comment>
<comment type="interaction">
    <interactant intactId="EBI-25831036">
        <id>Q99720-4</id>
    </interactant>
    <interactant intactId="EBI-296151">
        <id>P37173</id>
        <label>TGFBR2</label>
    </interactant>
    <organismsDiffer>false</organismsDiffer>
    <experiments>3</experiments>
</comment>
<comment type="subcellular location">
    <subcellularLocation>
        <location evidence="4">Nucleus inner membrane</location>
    </subcellularLocation>
    <subcellularLocation>
        <location evidence="4">Nucleus outer membrane</location>
    </subcellularLocation>
    <subcellularLocation>
        <location evidence="5 16">Nucleus envelope</location>
    </subcellularLocation>
    <subcellularLocation>
        <location evidence="4">Cytoplasmic vesicle</location>
    </subcellularLocation>
    <subcellularLocation>
        <location evidence="4">Endoplasmic reticulum membrane</location>
    </subcellularLocation>
    <subcellularLocation>
        <location evidence="5 13 16">Membrane</location>
        <topology evidence="13">Single-pass membrane protein</topology>
    </subcellularLocation>
    <subcellularLocation>
        <location evidence="1">Lipid droplet</location>
    </subcellularLocation>
    <subcellularLocation>
        <location>Cell junction</location>
    </subcellularLocation>
    <subcellularLocation>
        <location evidence="10">Cell membrane</location>
    </subcellularLocation>
    <subcellularLocation>
        <location>Cell projection</location>
        <location>Growth cone</location>
    </subcellularLocation>
    <subcellularLocation>
        <location evidence="10">Postsynaptic density membrane</location>
    </subcellularLocation>
    <text evidence="1 4 10">During interphase, detected at the inner and outer nuclear membrane and the endoplasmic reticulum. Detected on cytoplasmic vesicles during mitosis (PubMed:10406945). Targeted to lipid droplets, cholesterol and galactosylceramide-enriched domains of the endoplasmic reticulum. Accumulation at the endoplasmic reticulum is prominent in alpha-motor neurons of patients with amyotrophic lateral sclerosis (PubMed:23314020). Enriched at cell-cell communication regions, growth cone and postsynaptic structures. Localization is modulated by ligand-binding. In motor neurons it is enriched at cholinergic postsynaptic densities (By similarity).</text>
</comment>
<comment type="alternative products">
    <event type="alternative splicing"/>
    <isoform>
        <id>Q99720-1</id>
        <name>1</name>
        <sequence type="displayed"/>
    </isoform>
    <isoform>
        <id>Q99720-2</id>
        <name>2</name>
        <sequence type="described" ref="VSP_021982"/>
    </isoform>
    <isoform>
        <id>Q99720-3</id>
        <name>3</name>
        <name>Sigma-R1A</name>
        <sequence type="described" ref="VSP_021986"/>
    </isoform>
    <isoform>
        <id>Q99720-4</id>
        <name>4</name>
        <sequence type="described" ref="VSP_021984 VSP_021985"/>
    </isoform>
    <isoform>
        <id>Q99720-5</id>
        <name>5</name>
        <sequence type="described" ref="VSP_021981 VSP_021983"/>
    </isoform>
</comment>
<comment type="tissue specificity">
    <text evidence="6 10 15 16">Widely expressed with higher expression in liver, colon, prostate, placenta, small intestine, heart and pancreas. Expressed in the retina by retinal pigment epithelial cells. Expressed in alpha-motor neurons (PubMed:23314020).</text>
</comment>
<comment type="domain">
    <text evidence="13">The C-terminal helices form a flat, hydrophobic surface that is probably tightly associated with the cytosolic surface of the endoplasmic reticulum membrane.</text>
</comment>
<comment type="disease" evidence="9">
    <disease id="DI-03324">
        <name>Amyotrophic lateral sclerosis 16, juvenile</name>
        <acronym>ALS16</acronym>
        <description>A neurodegenerative disorder affecting upper motor neurons in the brain and lower motor neurons in the brain stem and spinal cord, resulting in fatal paralysis. Sensory abnormalities are absent. The pathologic hallmarks of the disease include pallor of the corticospinal tract due to loss of motor neurons, presence of ubiquitin-positive inclusions within surviving motor neurons, and deposition of pathologic aggregates. The etiology of amyotrophic lateral sclerosis is likely to be multifactorial, involving both genetic and environmental factors. The disease is inherited in 5-10% of the cases.</description>
        <dbReference type="MIM" id="614373"/>
    </disease>
    <text>The disease is caused by variants affecting the gene represented in this entry.</text>
</comment>
<comment type="disease" evidence="12 14">
    <disease id="DI-04545">
        <name>Neuronopathy, distal hereditary motor, autosomal recessive 2</name>
        <acronym>HMNR2</acronym>
        <description>A form of distal hereditary motor neuronopathy, a heterogeneous group of neuromuscular disorders caused by selective degeneration of motor neurons in the anterior horn of the spinal cord, without sensory deficit in the posterior horn. The overall clinical picture consists of a classical distal muscular atrophy syndrome in the legs without clinical sensory loss. The disease starts with weakness and wasting of distal muscles of the anterior tibial and peroneal compartments of the legs. Later on, weakness and atrophy may expand to the proximal muscles of the lower limbs and/or to the distal upper limbs. HMNR2 is characterized by onset of distal muscle weakness and wasting affecting the lower and upper limbs in the first decade.</description>
        <dbReference type="MIM" id="605726"/>
    </disease>
    <text>The disease is caused by variants affecting the gene represented in this entry.</text>
</comment>
<comment type="miscellaneous">
    <text>Depletion by RNAi inhibits growth and survival signaling cascades and induces cell death. The antagonist rimcazole produces the same effect.</text>
</comment>
<comment type="miscellaneous">
    <text evidence="19">Sigma receptors are classified into two subtypes (Sigma-1 and Sigma-2) based on their different pharmacological profile.</text>
</comment>
<comment type="similarity">
    <text evidence="22">Belongs to the ERG2 family.</text>
</comment>
<comment type="caution">
    <text evidence="11 13">The NMR solution structure identifies a second transmembrane helix starting with Gly-91 (PubMed:25647032). The X-ray structure clearly shows that this region is not helical and not in the membrane; instead it is part of two beta-strands (PubMed:27042935).</text>
</comment>
<comment type="online information" name="Wikipedia">
    <link uri="https://en.wikipedia.org/wiki/Sigma_1_Receptor"/>
    <text>Sigma-1 receptor entry</text>
</comment>
<reference key="1">
    <citation type="journal article" date="1996" name="Biochem. Biophys. Res. Commun.">
        <title>Cloning and functional expression of the human type 1 sigma receptor (hSigmaR1).</title>
        <authorList>
            <person name="Kekuda R."/>
            <person name="Prasad P.D."/>
            <person name="Fei Y.-J."/>
            <person name="Leibach F.H."/>
            <person name="Ganapathy V."/>
        </authorList>
    </citation>
    <scope>NUCLEOTIDE SEQUENCE [MRNA] (ISOFORM 1)</scope>
    <scope>TISSUE SPECIFICITY</scope>
    <source>
        <tissue>Choriocarcinoma</tissue>
    </source>
</reference>
<reference key="2">
    <citation type="journal article" date="1997" name="J. Biol. Chem.">
        <title>Purification and characterization of the human SR 31747A-binding protein. A nuclear membrane protein related to yeast sterol isomerase.</title>
        <authorList>
            <person name="Jbilo O."/>
            <person name="Vidal H."/>
            <person name="Paul R."/>
            <person name="De Nys N."/>
            <person name="Bensaid M."/>
            <person name="Silve S."/>
            <person name="Carayon P."/>
            <person name="Davi D."/>
            <person name="Galiegue S."/>
            <person name="Bourrie B."/>
            <person name="Guillemot J.-C."/>
            <person name="Ferrara P."/>
            <person name="Loison G."/>
            <person name="Maffrand J.-P."/>
            <person name="Le Fur G."/>
            <person name="Casellas P."/>
        </authorList>
    </citation>
    <scope>NUCLEOTIDE SEQUENCE [MRNA] (ISOFORM 1)</scope>
    <scope>PROTEIN SEQUENCE OF 40-47; 48-60; 61-64; 120-133 AND 212-222</scope>
    <scope>FUNCTION</scope>
    <scope>TISSUE SPECIFICITY</scope>
    <scope>SUBCELLULAR LOCATION</scope>
    <source>
        <tissue>Lymphoblast</tissue>
    </source>
</reference>
<reference key="3">
    <citation type="journal article" date="1998" name="J. Neurochem.">
        <title>Exon-intron structure, analysis of promoter region, and chromosomal localization of the human type 1 sigma receptor gene.</title>
        <authorList>
            <person name="Prasad P.D."/>
            <person name="Li H.W."/>
            <person name="Fei Y.-J."/>
            <person name="Ganapathy M.E."/>
            <person name="Fujita T."/>
            <person name="Plumley L.H."/>
            <person name="Yang-Feng T.L."/>
            <person name="Leibach F.H."/>
            <person name="Ganapathy V."/>
        </authorList>
    </citation>
    <scope>NUCLEOTIDE SEQUENCE [GENOMIC DNA]</scope>
</reference>
<reference key="4">
    <citation type="submission" date="2000-01" db="EMBL/GenBank/DDBJ databases">
        <authorList>
            <person name="Wang L.-M."/>
            <person name="Shelness G.S."/>
            <person name="Childers S.R."/>
            <person name="Mach R.H."/>
            <person name="Wheeler K.T."/>
        </authorList>
    </citation>
    <scope>NUCLEOTIDE SEQUENCE [MRNA] (ISOFORM 3)</scope>
    <source>
        <tissue>Mammary gland</tissue>
    </source>
</reference>
<reference key="5">
    <citation type="submission" date="2004-05" db="EMBL/GenBank/DDBJ databases">
        <title>Identification of a human aging-associated gene.</title>
        <authorList>
            <person name="Kim J.W."/>
        </authorList>
    </citation>
    <scope>NUCLEOTIDE SEQUENCE [LARGE SCALE MRNA] (ISOFORM 1)</scope>
</reference>
<reference key="6">
    <citation type="submission" date="2006-05" db="EMBL/GenBank/DDBJ databases">
        <title>A new splice variant of sigma-1 identified in human breast cancer biopsy sample.</title>
        <authorList>
            <person name="Zhang J."/>
            <person name="Aft R.L."/>
            <person name="Zhang F."/>
            <person name="Mach R.H."/>
        </authorList>
    </citation>
    <scope>NUCLEOTIDE SEQUENCE [MRNA] (ISOFORMS 2; 3 AND 4)</scope>
    <source>
        <tissue>Mammary cancer</tissue>
    </source>
</reference>
<reference key="7">
    <citation type="journal article" date="2004" name="Nat. Genet.">
        <title>Complete sequencing and characterization of 21,243 full-length human cDNAs.</title>
        <authorList>
            <person name="Ota T."/>
            <person name="Suzuki Y."/>
            <person name="Nishikawa T."/>
            <person name="Otsuki T."/>
            <person name="Sugiyama T."/>
            <person name="Irie R."/>
            <person name="Wakamatsu A."/>
            <person name="Hayashi K."/>
            <person name="Sato H."/>
            <person name="Nagai K."/>
            <person name="Kimura K."/>
            <person name="Makita H."/>
            <person name="Sekine M."/>
            <person name="Obayashi M."/>
            <person name="Nishi T."/>
            <person name="Shibahara T."/>
            <person name="Tanaka T."/>
            <person name="Ishii S."/>
            <person name="Yamamoto J."/>
            <person name="Saito K."/>
            <person name="Kawai Y."/>
            <person name="Isono Y."/>
            <person name="Nakamura Y."/>
            <person name="Nagahari K."/>
            <person name="Murakami K."/>
            <person name="Yasuda T."/>
            <person name="Iwayanagi T."/>
            <person name="Wagatsuma M."/>
            <person name="Shiratori A."/>
            <person name="Sudo H."/>
            <person name="Hosoiri T."/>
            <person name="Kaku Y."/>
            <person name="Kodaira H."/>
            <person name="Kondo H."/>
            <person name="Sugawara M."/>
            <person name="Takahashi M."/>
            <person name="Kanda K."/>
            <person name="Yokoi T."/>
            <person name="Furuya T."/>
            <person name="Kikkawa E."/>
            <person name="Omura Y."/>
            <person name="Abe K."/>
            <person name="Kamihara K."/>
            <person name="Katsuta N."/>
            <person name="Sato K."/>
            <person name="Tanikawa M."/>
            <person name="Yamazaki M."/>
            <person name="Ninomiya K."/>
            <person name="Ishibashi T."/>
            <person name="Yamashita H."/>
            <person name="Murakawa K."/>
            <person name="Fujimori K."/>
            <person name="Tanai H."/>
            <person name="Kimata M."/>
            <person name="Watanabe M."/>
            <person name="Hiraoka S."/>
            <person name="Chiba Y."/>
            <person name="Ishida S."/>
            <person name="Ono Y."/>
            <person name="Takiguchi S."/>
            <person name="Watanabe S."/>
            <person name="Yosida M."/>
            <person name="Hotuta T."/>
            <person name="Kusano J."/>
            <person name="Kanehori K."/>
            <person name="Takahashi-Fujii A."/>
            <person name="Hara H."/>
            <person name="Tanase T.-O."/>
            <person name="Nomura Y."/>
            <person name="Togiya S."/>
            <person name="Komai F."/>
            <person name="Hara R."/>
            <person name="Takeuchi K."/>
            <person name="Arita M."/>
            <person name="Imose N."/>
            <person name="Musashino K."/>
            <person name="Yuuki H."/>
            <person name="Oshima A."/>
            <person name="Sasaki N."/>
            <person name="Aotsuka S."/>
            <person name="Yoshikawa Y."/>
            <person name="Matsunawa H."/>
            <person name="Ichihara T."/>
            <person name="Shiohata N."/>
            <person name="Sano S."/>
            <person name="Moriya S."/>
            <person name="Momiyama H."/>
            <person name="Satoh N."/>
            <person name="Takami S."/>
            <person name="Terashima Y."/>
            <person name="Suzuki O."/>
            <person name="Nakagawa S."/>
            <person name="Senoh A."/>
            <person name="Mizoguchi H."/>
            <person name="Goto Y."/>
            <person name="Shimizu F."/>
            <person name="Wakebe H."/>
            <person name="Hishigaki H."/>
            <person name="Watanabe T."/>
            <person name="Sugiyama A."/>
            <person name="Takemoto M."/>
            <person name="Kawakami B."/>
            <person name="Yamazaki M."/>
            <person name="Watanabe K."/>
            <person name="Kumagai A."/>
            <person name="Itakura S."/>
            <person name="Fukuzumi Y."/>
            <person name="Fujimori Y."/>
            <person name="Komiyama M."/>
            <person name="Tashiro H."/>
            <person name="Tanigami A."/>
            <person name="Fujiwara T."/>
            <person name="Ono T."/>
            <person name="Yamada K."/>
            <person name="Fujii Y."/>
            <person name="Ozaki K."/>
            <person name="Hirao M."/>
            <person name="Ohmori Y."/>
            <person name="Kawabata A."/>
            <person name="Hikiji T."/>
            <person name="Kobatake N."/>
            <person name="Inagaki H."/>
            <person name="Ikema Y."/>
            <person name="Okamoto S."/>
            <person name="Okitani R."/>
            <person name="Kawakami T."/>
            <person name="Noguchi S."/>
            <person name="Itoh T."/>
            <person name="Shigeta K."/>
            <person name="Senba T."/>
            <person name="Matsumura K."/>
            <person name="Nakajima Y."/>
            <person name="Mizuno T."/>
            <person name="Morinaga M."/>
            <person name="Sasaki M."/>
            <person name="Togashi T."/>
            <person name="Oyama M."/>
            <person name="Hata H."/>
            <person name="Watanabe M."/>
            <person name="Komatsu T."/>
            <person name="Mizushima-Sugano J."/>
            <person name="Satoh T."/>
            <person name="Shirai Y."/>
            <person name="Takahashi Y."/>
            <person name="Nakagawa K."/>
            <person name="Okumura K."/>
            <person name="Nagase T."/>
            <person name="Nomura N."/>
            <person name="Kikuchi H."/>
            <person name="Masuho Y."/>
            <person name="Yamashita R."/>
            <person name="Nakai K."/>
            <person name="Yada T."/>
            <person name="Nakamura Y."/>
            <person name="Ohara O."/>
            <person name="Isogai T."/>
            <person name="Sugano S."/>
        </authorList>
    </citation>
    <scope>NUCLEOTIDE SEQUENCE [LARGE SCALE MRNA] (ISOFORM 5)</scope>
    <source>
        <tissue>Thyroid</tissue>
    </source>
</reference>
<reference key="8">
    <citation type="submission" date="2004-06" db="EMBL/GenBank/DDBJ databases">
        <title>Cloning of human full open reading frames in Gateway(TM) system entry vector (pDONR201).</title>
        <authorList>
            <person name="Ebert L."/>
            <person name="Schick M."/>
            <person name="Neubert P."/>
            <person name="Schatten R."/>
            <person name="Henze S."/>
            <person name="Korn B."/>
        </authorList>
    </citation>
    <scope>NUCLEOTIDE SEQUENCE [LARGE SCALE MRNA] (ISOFORM 1)</scope>
</reference>
<reference key="9">
    <citation type="submission" date="2005-04" db="EMBL/GenBank/DDBJ databases">
        <authorList>
            <person name="Suzuki Y."/>
            <person name="Sugano S."/>
            <person name="Totoki Y."/>
            <person name="Toyoda A."/>
            <person name="Takeda T."/>
            <person name="Sakaki Y."/>
            <person name="Tanaka A."/>
            <person name="Yokoyama S."/>
        </authorList>
    </citation>
    <scope>NUCLEOTIDE SEQUENCE [LARGE SCALE MRNA] (ISOFORM 1)</scope>
    <source>
        <tissue>Kidney</tissue>
    </source>
</reference>
<reference key="10">
    <citation type="journal article" date="2004" name="Nature">
        <title>DNA sequence and analysis of human chromosome 9.</title>
        <authorList>
            <person name="Humphray S.J."/>
            <person name="Oliver K."/>
            <person name="Hunt A.R."/>
            <person name="Plumb R.W."/>
            <person name="Loveland J.E."/>
            <person name="Howe K.L."/>
            <person name="Andrews T.D."/>
            <person name="Searle S."/>
            <person name="Hunt S.E."/>
            <person name="Scott C.E."/>
            <person name="Jones M.C."/>
            <person name="Ainscough R."/>
            <person name="Almeida J.P."/>
            <person name="Ambrose K.D."/>
            <person name="Ashwell R.I.S."/>
            <person name="Babbage A.K."/>
            <person name="Babbage S."/>
            <person name="Bagguley C.L."/>
            <person name="Bailey J."/>
            <person name="Banerjee R."/>
            <person name="Barker D.J."/>
            <person name="Barlow K.F."/>
            <person name="Bates K."/>
            <person name="Beasley H."/>
            <person name="Beasley O."/>
            <person name="Bird C.P."/>
            <person name="Bray-Allen S."/>
            <person name="Brown A.J."/>
            <person name="Brown J.Y."/>
            <person name="Burford D."/>
            <person name="Burrill W."/>
            <person name="Burton J."/>
            <person name="Carder C."/>
            <person name="Carter N.P."/>
            <person name="Chapman J.C."/>
            <person name="Chen Y."/>
            <person name="Clarke G."/>
            <person name="Clark S.Y."/>
            <person name="Clee C.M."/>
            <person name="Clegg S."/>
            <person name="Collier R.E."/>
            <person name="Corby N."/>
            <person name="Crosier M."/>
            <person name="Cummings A.T."/>
            <person name="Davies J."/>
            <person name="Dhami P."/>
            <person name="Dunn M."/>
            <person name="Dutta I."/>
            <person name="Dyer L.W."/>
            <person name="Earthrowl M.E."/>
            <person name="Faulkner L."/>
            <person name="Fleming C.J."/>
            <person name="Frankish A."/>
            <person name="Frankland J.A."/>
            <person name="French L."/>
            <person name="Fricker D.G."/>
            <person name="Garner P."/>
            <person name="Garnett J."/>
            <person name="Ghori J."/>
            <person name="Gilbert J.G.R."/>
            <person name="Glison C."/>
            <person name="Grafham D.V."/>
            <person name="Gribble S."/>
            <person name="Griffiths C."/>
            <person name="Griffiths-Jones S."/>
            <person name="Grocock R."/>
            <person name="Guy J."/>
            <person name="Hall R.E."/>
            <person name="Hammond S."/>
            <person name="Harley J.L."/>
            <person name="Harrison E.S.I."/>
            <person name="Hart E.A."/>
            <person name="Heath P.D."/>
            <person name="Henderson C.D."/>
            <person name="Hopkins B.L."/>
            <person name="Howard P.J."/>
            <person name="Howden P.J."/>
            <person name="Huckle E."/>
            <person name="Johnson C."/>
            <person name="Johnson D."/>
            <person name="Joy A.A."/>
            <person name="Kay M."/>
            <person name="Keenan S."/>
            <person name="Kershaw J.K."/>
            <person name="Kimberley A.M."/>
            <person name="King A."/>
            <person name="Knights A."/>
            <person name="Laird G.K."/>
            <person name="Langford C."/>
            <person name="Lawlor S."/>
            <person name="Leongamornlert D.A."/>
            <person name="Leversha M."/>
            <person name="Lloyd C."/>
            <person name="Lloyd D.M."/>
            <person name="Lovell J."/>
            <person name="Martin S."/>
            <person name="Mashreghi-Mohammadi M."/>
            <person name="Matthews L."/>
            <person name="McLaren S."/>
            <person name="McLay K.E."/>
            <person name="McMurray A."/>
            <person name="Milne S."/>
            <person name="Nickerson T."/>
            <person name="Nisbett J."/>
            <person name="Nordsiek G."/>
            <person name="Pearce A.V."/>
            <person name="Peck A.I."/>
            <person name="Porter K.M."/>
            <person name="Pandian R."/>
            <person name="Pelan S."/>
            <person name="Phillimore B."/>
            <person name="Povey S."/>
            <person name="Ramsey Y."/>
            <person name="Rand V."/>
            <person name="Scharfe M."/>
            <person name="Sehra H.K."/>
            <person name="Shownkeen R."/>
            <person name="Sims S.K."/>
            <person name="Skuce C.D."/>
            <person name="Smith M."/>
            <person name="Steward C.A."/>
            <person name="Swarbreck D."/>
            <person name="Sycamore N."/>
            <person name="Tester J."/>
            <person name="Thorpe A."/>
            <person name="Tracey A."/>
            <person name="Tromans A."/>
            <person name="Thomas D.W."/>
            <person name="Wall M."/>
            <person name="Wallis J.M."/>
            <person name="West A.P."/>
            <person name="Whitehead S.L."/>
            <person name="Willey D.L."/>
            <person name="Williams S.A."/>
            <person name="Wilming L."/>
            <person name="Wray P.W."/>
            <person name="Young L."/>
            <person name="Ashurst J.L."/>
            <person name="Coulson A."/>
            <person name="Blocker H."/>
            <person name="Durbin R.M."/>
            <person name="Sulston J.E."/>
            <person name="Hubbard T."/>
            <person name="Jackson M.J."/>
            <person name="Bentley D.R."/>
            <person name="Beck S."/>
            <person name="Rogers J."/>
            <person name="Dunham I."/>
        </authorList>
    </citation>
    <scope>NUCLEOTIDE SEQUENCE [LARGE SCALE GENOMIC DNA]</scope>
</reference>
<reference key="11">
    <citation type="submission" date="2005-09" db="EMBL/GenBank/DDBJ databases">
        <authorList>
            <person name="Mural R.J."/>
            <person name="Istrail S."/>
            <person name="Sutton G.G."/>
            <person name="Florea L."/>
            <person name="Halpern A.L."/>
            <person name="Mobarry C.M."/>
            <person name="Lippert R."/>
            <person name="Walenz B."/>
            <person name="Shatkay H."/>
            <person name="Dew I."/>
            <person name="Miller J.R."/>
            <person name="Flanigan M.J."/>
            <person name="Edwards N.J."/>
            <person name="Bolanos R."/>
            <person name="Fasulo D."/>
            <person name="Halldorsson B.V."/>
            <person name="Hannenhalli S."/>
            <person name="Turner R."/>
            <person name="Yooseph S."/>
            <person name="Lu F."/>
            <person name="Nusskern D.R."/>
            <person name="Shue B.C."/>
            <person name="Zheng X.H."/>
            <person name="Zhong F."/>
            <person name="Delcher A.L."/>
            <person name="Huson D.H."/>
            <person name="Kravitz S.A."/>
            <person name="Mouchard L."/>
            <person name="Reinert K."/>
            <person name="Remington K.A."/>
            <person name="Clark A.G."/>
            <person name="Waterman M.S."/>
            <person name="Eichler E.E."/>
            <person name="Adams M.D."/>
            <person name="Hunkapiller M.W."/>
            <person name="Myers E.W."/>
            <person name="Venter J.C."/>
        </authorList>
    </citation>
    <scope>NUCLEOTIDE SEQUENCE [LARGE SCALE GENOMIC DNA]</scope>
</reference>
<reference key="12">
    <citation type="journal article" date="2004" name="Genome Res.">
        <title>The status, quality, and expansion of the NIH full-length cDNA project: the Mammalian Gene Collection (MGC).</title>
        <authorList>
            <consortium name="The MGC Project Team"/>
        </authorList>
    </citation>
    <scope>NUCLEOTIDE SEQUENCE [LARGE SCALE MRNA] (ISOFORMS 1 AND 4)</scope>
    <source>
        <tissue>Brain</tissue>
        <tissue>Muscle</tissue>
    </source>
</reference>
<reference key="13">
    <citation type="journal article" date="1999" name="Eur. J. Biochem.">
        <title>Colocalization of sterol isomerase and sigma(1) receptor at endoplasmic reticulum and nuclear envelope level.</title>
        <authorList>
            <person name="Dussossoy D."/>
            <person name="Carayon P."/>
            <person name="Belugou S."/>
            <person name="Feraut D."/>
            <person name="Bord A."/>
            <person name="Goubet C."/>
            <person name="Roque C."/>
            <person name="Vidal H."/>
            <person name="Combes T."/>
            <person name="Loison G."/>
            <person name="Casellas P."/>
        </authorList>
    </citation>
    <scope>SUBCELLULAR LOCATION</scope>
</reference>
<reference key="14">
    <citation type="journal article" date="1999" name="J. Pharmacol. Exp. Ther.">
        <title>Molecular and ligand-binding characterization of the sigma-receptor in the Jurkat human T lymphocyte cell line.</title>
        <authorList>
            <person name="Ganapathy M.E."/>
            <person name="Prasad P.D."/>
            <person name="Huang W."/>
            <person name="Seth P."/>
            <person name="Leibach F.H."/>
            <person name="Ganapathy V."/>
        </authorList>
    </citation>
    <scope>CHARACTERIZATION (ISOFORM 3)</scope>
</reference>
<reference key="15">
    <citation type="journal article" date="2001" name="Biochim. Biophys. Acta">
        <title>Expression pattern of the type 1 sigma receptor in the brain and identity of critical anionic amino acid residues in the ligand-binding domain of the receptor.</title>
        <authorList>
            <person name="Seth P."/>
            <person name="Ganapathy M.E."/>
            <person name="Conway S.J."/>
            <person name="Bridges C.D."/>
            <person name="Smith S.B."/>
            <person name="Casellas P."/>
            <person name="Ganapathy V."/>
        </authorList>
    </citation>
    <scope>MUTAGENESIS OF GLU-123; ASP-126; GLU-138; GLU-144; GLU-150; GLU-158; GLU-163; GLU-172; ASP-188; ASP-195 AND GLU-213</scope>
    <scope>SUBCELLULAR LOCATION</scope>
</reference>
<reference key="16">
    <citation type="journal article" date="2001" name="Brain Res. Mol. Brain Res.">
        <title>Expression pattern of sigma receptor 1 mRNA and protein in mammalian retina.</title>
        <authorList>
            <person name="Ola M.S."/>
            <person name="Moore P."/>
            <person name="El-Sherbeny A."/>
            <person name="Roon P."/>
            <person name="Agarwal N."/>
            <person name="Sarthy V.P."/>
            <person name="Casellas P."/>
            <person name="Ganapathy V."/>
            <person name="Smith S.B."/>
        </authorList>
    </citation>
    <scope>TISSUE SPECIFICITY</scope>
</reference>
<reference key="17">
    <citation type="journal article" date="2006" name="Exp. Cell Res.">
        <title>Silencing of sigma-1 receptor induces cell death in human lens cells.</title>
        <authorList>
            <person name="Wang L."/>
            <person name="Duncan G."/>
        </authorList>
    </citation>
    <scope>FUNCTION</scope>
</reference>
<reference key="18">
    <citation type="journal article" date="2011" name="BMC Syst. Biol.">
        <title>Initial characterization of the human central proteome.</title>
        <authorList>
            <person name="Burkard T.R."/>
            <person name="Planyavsky M."/>
            <person name="Kaupe I."/>
            <person name="Breitwieser F.P."/>
            <person name="Buerckstuemmer T."/>
            <person name="Bennett K.L."/>
            <person name="Superti-Furga G."/>
            <person name="Colinge J."/>
        </authorList>
    </citation>
    <scope>IDENTIFICATION BY MASS SPECTROMETRY [LARGE SCALE ANALYSIS]</scope>
</reference>
<reference key="19">
    <citation type="journal article" date="2014" name="J. Proteomics">
        <title>An enzyme assisted RP-RPLC approach for in-depth analysis of human liver phosphoproteome.</title>
        <authorList>
            <person name="Bian Y."/>
            <person name="Song C."/>
            <person name="Cheng K."/>
            <person name="Dong M."/>
            <person name="Wang F."/>
            <person name="Huang J."/>
            <person name="Sun D."/>
            <person name="Wang L."/>
            <person name="Ye M."/>
            <person name="Zou H."/>
        </authorList>
    </citation>
    <scope>IDENTIFICATION BY MASS SPECTROMETRY [LARGE SCALE ANALYSIS]</scope>
    <source>
        <tissue>Liver</tissue>
    </source>
</reference>
<reference key="20">
    <citation type="journal article" date="2015" name="Proteomics">
        <title>N-terminome analysis of the human mitochondrial proteome.</title>
        <authorList>
            <person name="Vaca Jacome A.S."/>
            <person name="Rabilloud T."/>
            <person name="Schaeffer-Reiss C."/>
            <person name="Rompais M."/>
            <person name="Ayoub D."/>
            <person name="Lane L."/>
            <person name="Bairoch A."/>
            <person name="Van Dorsselaer A."/>
            <person name="Carapito C."/>
        </authorList>
    </citation>
    <scope>IDENTIFICATION BY MASS SPECTROMETRY [LARGE SCALE ANALYSIS]</scope>
</reference>
<reference key="21">
    <citation type="journal article" date="2015" name="FEBS Lett.">
        <title>Solution NMR studies reveal the location of the second transmembrane domain of the human sigma-1 receptor.</title>
        <authorList>
            <person name="Ortega-Roldan J.L."/>
            <person name="Ossa F."/>
            <person name="Amin N.T."/>
            <person name="Schnell J.R."/>
        </authorList>
    </citation>
    <scope>STRUCTURE BY NMR OF 36-233</scope>
</reference>
<reference key="22">
    <citation type="journal article" date="2016" name="Nature">
        <title>Crystal structure of the human sigma1 receptor.</title>
        <authorList>
            <person name="Schmidt H.R."/>
            <person name="Zheng S."/>
            <person name="Gurpinar E."/>
            <person name="Koehl A."/>
            <person name="Manglik A."/>
            <person name="Kruse A.C."/>
        </authorList>
    </citation>
    <scope>X-RAY CRYSTALLOGRAPHY (2.51 ANGSTROMS)</scope>
    <scope>SUBUNIT</scope>
    <scope>SUBCELLULAR LOCATION</scope>
    <scope>TOPOLOGY</scope>
    <scope>DOMAIN</scope>
</reference>
<reference key="23">
    <citation type="journal article" date="2004" name="Psychiatry Clin. Neurosci.">
        <title>Lack of association between sigma receptor gene variants and schizophrenia.</title>
        <authorList>
            <person name="Satoh F."/>
            <person name="Miyatake R."/>
            <person name="Furukawa A."/>
            <person name="Suwaki H."/>
        </authorList>
    </citation>
    <scope>VARIANTS PRO-2 AND GLN-211</scope>
</reference>
<reference key="24">
    <citation type="journal article" date="2011" name="Ann. Neurol.">
        <title>A mutation in sigma-1 receptor causes juvenile amyotrophic lateral sclerosis.</title>
        <authorList>
            <person name="Al-Saif A."/>
            <person name="Al-Mohanna F."/>
            <person name="Bohlega S."/>
        </authorList>
    </citation>
    <scope>INVOLVEMENT IN ALS16</scope>
    <scope>VARIANT ALS16 GLN-102</scope>
    <scope>CHARACTERIZATION OF VARIANT ALS16 GLN-102</scope>
</reference>
<reference key="25">
    <citation type="journal article" date="2012" name="Expert Opin. Drug Metab. Toxicol.">
        <title>S2R(Pgrmc1): the cytochrome-related sigma-2 receptor that regulates lipid and drug metabolism and hormone signaling.</title>
        <authorList>
            <person name="Ahmed I.S."/>
            <person name="Chamberlain C."/>
            <person name="Craven R.J."/>
        </authorList>
    </citation>
    <scope>MISCELLANEOUS</scope>
    <scope>REVIEW</scope>
</reference>
<reference key="26">
    <citation type="journal article" date="2013" name="Hum. Mol. Genet.">
        <title>Altered localization, abnormal modification and loss of function of Sigma receptor-1 in amyotrophic lateral sclerosis.</title>
        <authorList>
            <person name="Prause J."/>
            <person name="Goswami A."/>
            <person name="Katona I."/>
            <person name="Roos A."/>
            <person name="Schnizler M."/>
            <person name="Bushuven E."/>
            <person name="Dreier A."/>
            <person name="Buchkremer S."/>
            <person name="Johann S."/>
            <person name="Beyer C."/>
            <person name="Deschauer M."/>
            <person name="Troost D."/>
            <person name="Weis J."/>
        </authorList>
    </citation>
    <scope>TISSUE SPECIFICITY</scope>
    <scope>SUBCELLULAR LOCATION</scope>
</reference>
<reference key="27">
    <citation type="journal article" date="2015" name="Neurology">
        <title>A SIGMAR1 splice-site mutation causes distal hereditary motor neuropathy.</title>
        <authorList>
            <person name="Li X."/>
            <person name="Hu Z."/>
            <person name="Liu L."/>
            <person name="Xie Y."/>
            <person name="Zhan Y."/>
            <person name="Zi X."/>
            <person name="Wang J."/>
            <person name="Wu L."/>
            <person name="Xia K."/>
            <person name="Tang B."/>
            <person name="Zhang R."/>
        </authorList>
    </citation>
    <scope>INVOLVEMENT IN HMNR2</scope>
</reference>
<reference key="28">
    <citation type="journal article" date="2016" name="Neurology">
        <title>SIGMAR1 mutation associated with autosomal recessive Silver-like syndrome.</title>
        <authorList>
            <person name="Horga A."/>
            <person name="Tomaselli P.J."/>
            <person name="Gonzalez M.A."/>
            <person name="Laura M."/>
            <person name="Muntoni F."/>
            <person name="Manzur A.Y."/>
            <person name="Hanna M.G."/>
            <person name="Blake J.C."/>
            <person name="Houlden H."/>
            <person name="Zuechner S."/>
            <person name="Reilly M.M."/>
        </authorList>
    </citation>
    <scope>VARIANT HMNR2 GLN-65</scope>
</reference>
<evidence type="ECO:0000250" key="1">
    <source>
        <dbReference type="UniProtKB" id="O55242"/>
    </source>
</evidence>
<evidence type="ECO:0000250" key="2">
    <source>
        <dbReference type="UniProtKB" id="Q60492"/>
    </source>
</evidence>
<evidence type="ECO:0000250" key="3">
    <source>
        <dbReference type="UniProtKB" id="Q9R0C9"/>
    </source>
</evidence>
<evidence type="ECO:0000269" key="4">
    <source>
    </source>
</evidence>
<evidence type="ECO:0000269" key="5">
    <source>
    </source>
</evidence>
<evidence type="ECO:0000269" key="6">
    <source>
    </source>
</evidence>
<evidence type="ECO:0000269" key="7">
    <source>
    </source>
</evidence>
<evidence type="ECO:0000269" key="8">
    <source>
    </source>
</evidence>
<evidence type="ECO:0000269" key="9">
    <source>
    </source>
</evidence>
<evidence type="ECO:0000269" key="10">
    <source>
    </source>
</evidence>
<evidence type="ECO:0000269" key="11">
    <source>
    </source>
</evidence>
<evidence type="ECO:0000269" key="12">
    <source>
    </source>
</evidence>
<evidence type="ECO:0000269" key="13">
    <source>
    </source>
</evidence>
<evidence type="ECO:0000269" key="14">
    <source>
    </source>
</evidence>
<evidence type="ECO:0000269" key="15">
    <source>
    </source>
</evidence>
<evidence type="ECO:0000269" key="16">
    <source>
    </source>
</evidence>
<evidence type="ECO:0000303" key="17">
    <source>
    </source>
</evidence>
<evidence type="ECO:0000303" key="18">
    <source>
    </source>
</evidence>
<evidence type="ECO:0000303" key="19">
    <source>
    </source>
</evidence>
<evidence type="ECO:0000303" key="20">
    <source ref="4"/>
</evidence>
<evidence type="ECO:0000303" key="21">
    <source ref="6"/>
</evidence>
<evidence type="ECO:0000305" key="22"/>
<evidence type="ECO:0000305" key="23">
    <source>
    </source>
</evidence>
<evidence type="ECO:0007829" key="24">
    <source>
        <dbReference type="PDB" id="5HK1"/>
    </source>
</evidence>
<evidence type="ECO:0007829" key="25">
    <source>
        <dbReference type="PDB" id="6DK0"/>
    </source>
</evidence>
<dbReference type="EMBL" id="U75283">
    <property type="protein sequence ID" value="AAB50402.1"/>
    <property type="molecule type" value="mRNA"/>
</dbReference>
<dbReference type="EMBL" id="U79528">
    <property type="protein sequence ID" value="AAB51238.1"/>
    <property type="molecule type" value="mRNA"/>
</dbReference>
<dbReference type="EMBL" id="AF001977">
    <property type="protein sequence ID" value="AAC04507.1"/>
    <property type="molecule type" value="Genomic_DNA"/>
</dbReference>
<dbReference type="EMBL" id="AF001976">
    <property type="protein sequence ID" value="AAC04507.1"/>
    <property type="status" value="JOINED"/>
    <property type="molecule type" value="Genomic_DNA"/>
</dbReference>
<dbReference type="EMBL" id="AF226604">
    <property type="protein sequence ID" value="AAF64280.1"/>
    <property type="molecule type" value="mRNA"/>
</dbReference>
<dbReference type="EMBL" id="AY633611">
    <property type="protein sequence ID" value="AAV33304.1"/>
    <property type="molecule type" value="mRNA"/>
</dbReference>
<dbReference type="EMBL" id="DQ644568">
    <property type="protein sequence ID" value="ABG29111.1"/>
    <property type="molecule type" value="mRNA"/>
</dbReference>
<dbReference type="EMBL" id="DQ647702">
    <property type="protein sequence ID" value="ABG36559.1"/>
    <property type="molecule type" value="mRNA"/>
</dbReference>
<dbReference type="EMBL" id="DQ656583">
    <property type="protein sequence ID" value="ABG46369.1"/>
    <property type="molecule type" value="mRNA"/>
</dbReference>
<dbReference type="EMBL" id="AK098451">
    <property type="protein sequence ID" value="BAC05307.1"/>
    <property type="molecule type" value="mRNA"/>
</dbReference>
<dbReference type="EMBL" id="CR457075">
    <property type="protein sequence ID" value="CAG33356.1"/>
    <property type="molecule type" value="mRNA"/>
</dbReference>
<dbReference type="EMBL" id="AK222899">
    <property type="protein sequence ID" value="BAD96619.1"/>
    <property type="molecule type" value="mRNA"/>
</dbReference>
<dbReference type="EMBL" id="AL450283">
    <property type="status" value="NOT_ANNOTATED_CDS"/>
    <property type="molecule type" value="Genomic_DNA"/>
</dbReference>
<dbReference type="EMBL" id="CH471071">
    <property type="protein sequence ID" value="EAW58431.1"/>
    <property type="molecule type" value="Genomic_DNA"/>
</dbReference>
<dbReference type="EMBL" id="CH471071">
    <property type="protein sequence ID" value="EAW58434.1"/>
    <property type="molecule type" value="Genomic_DNA"/>
</dbReference>
<dbReference type="EMBL" id="BC004899">
    <property type="protein sequence ID" value="AAH04899.1"/>
    <property type="molecule type" value="mRNA"/>
</dbReference>
<dbReference type="EMBL" id="BC007839">
    <property type="protein sequence ID" value="AAH07839.1"/>
    <property type="molecule type" value="mRNA"/>
</dbReference>
<dbReference type="CCDS" id="CCDS6562.1">
    <molecule id="Q99720-1"/>
</dbReference>
<dbReference type="CCDS" id="CCDS6563.1">
    <molecule id="Q99720-3"/>
</dbReference>
<dbReference type="CCDS" id="CCDS94402.1">
    <molecule id="Q99720-2"/>
</dbReference>
<dbReference type="PIR" id="JC5266">
    <property type="entry name" value="JC5266"/>
</dbReference>
<dbReference type="RefSeq" id="NP_001269134.1">
    <property type="nucleotide sequence ID" value="NM_001282205.1"/>
</dbReference>
<dbReference type="RefSeq" id="NP_001269135.1">
    <property type="nucleotide sequence ID" value="NM_001282206.1"/>
</dbReference>
<dbReference type="RefSeq" id="NP_001269136.1">
    <molecule id="Q99720-2"/>
    <property type="nucleotide sequence ID" value="NM_001282207.2"/>
</dbReference>
<dbReference type="RefSeq" id="NP_001269137.1">
    <property type="nucleotide sequence ID" value="NM_001282208.1"/>
</dbReference>
<dbReference type="RefSeq" id="NP_001269138.1">
    <property type="nucleotide sequence ID" value="NM_001282209.1"/>
</dbReference>
<dbReference type="RefSeq" id="NP_005857.1">
    <molecule id="Q99720-1"/>
    <property type="nucleotide sequence ID" value="NM_005866.4"/>
</dbReference>
<dbReference type="RefSeq" id="NP_671513.1">
    <molecule id="Q99720-3"/>
    <property type="nucleotide sequence ID" value="NM_147157.3"/>
</dbReference>
<dbReference type="PDB" id="5HK1">
    <property type="method" value="X-ray"/>
    <property type="resolution" value="2.51 A"/>
    <property type="chains" value="A/B/C=1-223"/>
</dbReference>
<dbReference type="PDB" id="5HK2">
    <property type="method" value="X-ray"/>
    <property type="resolution" value="3.20 A"/>
    <property type="chains" value="A/B/C=1-223"/>
</dbReference>
<dbReference type="PDB" id="6DJZ">
    <property type="method" value="X-ray"/>
    <property type="resolution" value="3.08 A"/>
    <property type="chains" value="A/B/C=1-223"/>
</dbReference>
<dbReference type="PDB" id="6DK0">
    <property type="method" value="X-ray"/>
    <property type="resolution" value="2.90 A"/>
    <property type="chains" value="A/B/C=1-223"/>
</dbReference>
<dbReference type="PDB" id="6DK1">
    <property type="method" value="X-ray"/>
    <property type="resolution" value="3.12 A"/>
    <property type="chains" value="A/B/C=1-223"/>
</dbReference>
<dbReference type="PDBsum" id="5HK1"/>
<dbReference type="PDBsum" id="5HK2"/>
<dbReference type="PDBsum" id="6DJZ"/>
<dbReference type="PDBsum" id="6DK0"/>
<dbReference type="PDBsum" id="6DK1"/>
<dbReference type="BMRB" id="Q99720"/>
<dbReference type="SMR" id="Q99720"/>
<dbReference type="BioGRID" id="115569">
    <property type="interactions" value="155"/>
</dbReference>
<dbReference type="CORUM" id="Q99720"/>
<dbReference type="DIP" id="DIP-61974N"/>
<dbReference type="ELM" id="Q99720"/>
<dbReference type="FunCoup" id="Q99720">
    <property type="interactions" value="717"/>
</dbReference>
<dbReference type="IntAct" id="Q99720">
    <property type="interactions" value="87"/>
</dbReference>
<dbReference type="MINT" id="Q99720"/>
<dbReference type="STRING" id="9606.ENSP00000277010"/>
<dbReference type="BindingDB" id="Q99720"/>
<dbReference type="ChEMBL" id="CHEMBL287"/>
<dbReference type="DrugBank" id="DB16911">
    <property type="generic name" value="AF-710B"/>
</dbReference>
<dbReference type="DrugBank" id="DB00321">
    <property type="generic name" value="Amitriptyline"/>
</dbReference>
<dbReference type="DrugBank" id="DB05592">
    <property type="generic name" value="Blarcamesine"/>
</dbReference>
<dbReference type="DrugBank" id="DB09014">
    <property type="generic name" value="Captodiame"/>
</dbReference>
<dbReference type="DrugBank" id="DB00907">
    <property type="generic name" value="Cocaine"/>
</dbReference>
<dbReference type="DrugBank" id="DB06618">
    <property type="generic name" value="Cutamesine"/>
</dbReference>
<dbReference type="DrugBank" id="DB19054">
    <property type="generic name" value="Deudextromethorphan"/>
</dbReference>
<dbReference type="DrugBank" id="DB00514">
    <property type="generic name" value="Dextromethorphan"/>
</dbReference>
<dbReference type="DrugBank" id="DB13810">
    <property type="generic name" value="Dimemorfan"/>
</dbReference>
<dbReference type="DrugBank" id="DB01488">
    <property type="generic name" value="Dimethyltryptamine"/>
</dbReference>
<dbReference type="DrugBank" id="DB00574">
    <property type="generic name" value="Fenfluramine"/>
</dbReference>
<dbReference type="DrugBank" id="DB00502">
    <property type="generic name" value="Haloperidol"/>
</dbReference>
<dbReference type="DrugBank" id="DB00956">
    <property type="generic name" value="Hydrocodone"/>
</dbReference>
<dbReference type="DrugBank" id="DB00704">
    <property type="generic name" value="Naltrexone"/>
</dbReference>
<dbReference type="DrugBank" id="DB00540">
    <property type="generic name" value="Nortriptyline"/>
</dbReference>
<dbReference type="DrugBank" id="DB06174">
    <property type="generic name" value="Noscapine"/>
</dbReference>
<dbReference type="DrugBank" id="DB05422">
    <property type="generic name" value="OPC-14523"/>
</dbReference>
<dbReference type="DrugBank" id="DB00652">
    <property type="generic name" value="Pentazocine"/>
</dbReference>
<dbReference type="DrugBank" id="DB11186">
    <property type="generic name" value="Pentoxyverine"/>
</dbReference>
<dbReference type="DrugBank" id="DB03575">
    <property type="generic name" value="Phencyclidine"/>
</dbReference>
<dbReference type="DrugBank" id="DB05316">
    <property type="generic name" value="Pimavanserin"/>
</dbReference>
<dbReference type="DrugBank" id="DB01708">
    <property type="generic name" value="Prasterone"/>
</dbReference>
<dbReference type="DrugBank" id="DB00409">
    <property type="generic name" value="Remoxipride"/>
</dbReference>
<dbReference type="DrugBank" id="DB01104">
    <property type="generic name" value="Sertraline"/>
</dbReference>
<dbReference type="DrugBank" id="DB02383">
    <property type="generic name" value="Tolrestat"/>
</dbReference>
<dbReference type="DrugCentral" id="Q99720"/>
<dbReference type="GuidetoPHARMACOLOGY" id="2552"/>
<dbReference type="TCDB" id="8.A.63.1.1">
    <property type="family name" value="the sigma non-opioid intracellular receptor (s1r) family"/>
</dbReference>
<dbReference type="iPTMnet" id="Q99720"/>
<dbReference type="PhosphoSitePlus" id="Q99720"/>
<dbReference type="SwissPalm" id="Q99720"/>
<dbReference type="BioMuta" id="SIGMAR1"/>
<dbReference type="DMDM" id="74752153"/>
<dbReference type="jPOST" id="Q99720"/>
<dbReference type="MassIVE" id="Q99720"/>
<dbReference type="PaxDb" id="9606-ENSP00000277010"/>
<dbReference type="PeptideAtlas" id="Q99720"/>
<dbReference type="ProteomicsDB" id="78435">
    <molecule id="Q99720-1"/>
</dbReference>
<dbReference type="ProteomicsDB" id="78436">
    <molecule id="Q99720-2"/>
</dbReference>
<dbReference type="ProteomicsDB" id="78437">
    <molecule id="Q99720-3"/>
</dbReference>
<dbReference type="ProteomicsDB" id="78438">
    <molecule id="Q99720-4"/>
</dbReference>
<dbReference type="ProteomicsDB" id="78439">
    <molecule id="Q99720-5"/>
</dbReference>
<dbReference type="Pumba" id="Q99720"/>
<dbReference type="TopDownProteomics" id="Q99720-1">
    <molecule id="Q99720-1"/>
</dbReference>
<dbReference type="TopDownProteomics" id="Q99720-2">
    <molecule id="Q99720-2"/>
</dbReference>
<dbReference type="TopDownProteomics" id="Q99720-3">
    <molecule id="Q99720-3"/>
</dbReference>
<dbReference type="TopDownProteomics" id="Q99720-4">
    <molecule id="Q99720-4"/>
</dbReference>
<dbReference type="TopDownProteomics" id="Q99720-5">
    <molecule id="Q99720-5"/>
</dbReference>
<dbReference type="Antibodypedia" id="2756">
    <property type="antibodies" value="244 antibodies from 35 providers"/>
</dbReference>
<dbReference type="DNASU" id="10280"/>
<dbReference type="Ensembl" id="ENST00000277010.9">
    <molecule id="Q99720-1"/>
    <property type="protein sequence ID" value="ENSP00000277010.4"/>
    <property type="gene ID" value="ENSG00000147955.18"/>
</dbReference>
<dbReference type="Ensembl" id="ENST00000353468.4">
    <molecule id="Q99720-4"/>
    <property type="protein sequence ID" value="ENSP00000434453.1"/>
    <property type="gene ID" value="ENSG00000147955.18"/>
</dbReference>
<dbReference type="Ensembl" id="ENST00000477726.1">
    <molecule id="Q99720-3"/>
    <property type="protein sequence ID" value="ENSP00000420022.1"/>
    <property type="gene ID" value="ENSG00000147955.18"/>
</dbReference>
<dbReference type="Ensembl" id="ENST00000679597.1">
    <molecule id="Q99720-2"/>
    <property type="protein sequence ID" value="ENSP00000505634.1"/>
    <property type="gene ID" value="ENSG00000147955.18"/>
</dbReference>
<dbReference type="GeneID" id="10280"/>
<dbReference type="KEGG" id="hsa:10280"/>
<dbReference type="MANE-Select" id="ENST00000277010.9">
    <property type="protein sequence ID" value="ENSP00000277010.4"/>
    <property type="RefSeq nucleotide sequence ID" value="NM_005866.4"/>
    <property type="RefSeq protein sequence ID" value="NP_005857.1"/>
</dbReference>
<dbReference type="UCSC" id="uc003zvb.5">
    <molecule id="Q99720-1"/>
    <property type="organism name" value="human"/>
</dbReference>
<dbReference type="AGR" id="HGNC:8157"/>
<dbReference type="CTD" id="10280"/>
<dbReference type="DisGeNET" id="10280"/>
<dbReference type="GeneCards" id="SIGMAR1"/>
<dbReference type="GeneReviews" id="SIGMAR1"/>
<dbReference type="HGNC" id="HGNC:8157">
    <property type="gene designation" value="SIGMAR1"/>
</dbReference>
<dbReference type="HPA" id="ENSG00000147955">
    <property type="expression patterns" value="Tissue enhanced (liver)"/>
</dbReference>
<dbReference type="MalaCards" id="SIGMAR1"/>
<dbReference type="MIM" id="601978">
    <property type="type" value="gene"/>
</dbReference>
<dbReference type="MIM" id="605726">
    <property type="type" value="phenotype"/>
</dbReference>
<dbReference type="MIM" id="614373">
    <property type="type" value="phenotype"/>
</dbReference>
<dbReference type="neXtProt" id="NX_Q99720"/>
<dbReference type="OpenTargets" id="ENSG00000147955"/>
<dbReference type="Orphanet" id="139552">
    <property type="disease" value="Distal hereditary motor neuropathy, Jerash type"/>
</dbReference>
<dbReference type="Orphanet" id="300605">
    <property type="disease" value="Juvenile amyotrophic lateral sclerosis"/>
</dbReference>
<dbReference type="PharmGKB" id="PA164725706"/>
<dbReference type="VEuPathDB" id="HostDB:ENSG00000147955"/>
<dbReference type="eggNOG" id="KOG4143">
    <property type="taxonomic scope" value="Eukaryota"/>
</dbReference>
<dbReference type="GeneTree" id="ENSGT00390000012082"/>
<dbReference type="HOGENOM" id="CLU_147736_0_0_1"/>
<dbReference type="InParanoid" id="Q99720"/>
<dbReference type="OMA" id="AMYVIHA"/>
<dbReference type="OrthoDB" id="347124at2759"/>
<dbReference type="PAN-GO" id="Q99720">
    <property type="GO annotations" value="1 GO annotation based on evolutionary models"/>
</dbReference>
<dbReference type="PhylomeDB" id="Q99720"/>
<dbReference type="TreeFam" id="TF300106"/>
<dbReference type="PathwayCommons" id="Q99720"/>
<dbReference type="Reactome" id="R-HSA-9679191">
    <property type="pathway name" value="Potential therapeutics for SARS"/>
</dbReference>
<dbReference type="SignaLink" id="Q99720"/>
<dbReference type="SIGNOR" id="Q99720"/>
<dbReference type="BioGRID-ORCS" id="10280">
    <property type="hits" value="24 hits in 1174 CRISPR screens"/>
</dbReference>
<dbReference type="CD-CODE" id="FB4E32DD">
    <property type="entry name" value="Presynaptic clusters and postsynaptic densities"/>
</dbReference>
<dbReference type="ChiTaRS" id="SIGMAR1">
    <property type="organism name" value="human"/>
</dbReference>
<dbReference type="GeneWiki" id="Sigma-1_receptor"/>
<dbReference type="GenomeRNAi" id="10280"/>
<dbReference type="Pharos" id="Q99720">
    <property type="development level" value="Tclin"/>
</dbReference>
<dbReference type="PRO" id="PR:Q99720"/>
<dbReference type="Proteomes" id="UP000005640">
    <property type="component" value="Chromosome 9"/>
</dbReference>
<dbReference type="RNAct" id="Q99720">
    <property type="molecule type" value="protein"/>
</dbReference>
<dbReference type="Bgee" id="ENSG00000147955">
    <property type="expression patterns" value="Expressed in right lobe of liver and 199 other cell types or tissues"/>
</dbReference>
<dbReference type="ExpressionAtlas" id="Q99720">
    <property type="expression patterns" value="baseline and differential"/>
</dbReference>
<dbReference type="GO" id="GO:0070161">
    <property type="term" value="C:anchoring junction"/>
    <property type="evidence" value="ECO:0007669"/>
    <property type="project" value="UniProtKB-SubCell"/>
</dbReference>
<dbReference type="GO" id="GO:0031410">
    <property type="term" value="C:cytoplasmic vesicle"/>
    <property type="evidence" value="ECO:0007669"/>
    <property type="project" value="UniProtKB-KW"/>
</dbReference>
<dbReference type="GO" id="GO:0005829">
    <property type="term" value="C:cytosol"/>
    <property type="evidence" value="ECO:0000304"/>
    <property type="project" value="Reactome"/>
</dbReference>
<dbReference type="GO" id="GO:0005783">
    <property type="term" value="C:endoplasmic reticulum"/>
    <property type="evidence" value="ECO:0000314"/>
    <property type="project" value="UniProtKB"/>
</dbReference>
<dbReference type="GO" id="GO:0005789">
    <property type="term" value="C:endoplasmic reticulum membrane"/>
    <property type="evidence" value="ECO:0007669"/>
    <property type="project" value="UniProtKB-SubCell"/>
</dbReference>
<dbReference type="GO" id="GO:0098978">
    <property type="term" value="C:glutamatergic synapse"/>
    <property type="evidence" value="ECO:0007669"/>
    <property type="project" value="Ensembl"/>
</dbReference>
<dbReference type="GO" id="GO:0030426">
    <property type="term" value="C:growth cone"/>
    <property type="evidence" value="ECO:0007669"/>
    <property type="project" value="UniProtKB-SubCell"/>
</dbReference>
<dbReference type="GO" id="GO:0005811">
    <property type="term" value="C:lipid droplet"/>
    <property type="evidence" value="ECO:0007669"/>
    <property type="project" value="UniProtKB-SubCell"/>
</dbReference>
<dbReference type="GO" id="GO:0016020">
    <property type="term" value="C:membrane"/>
    <property type="evidence" value="ECO:0000314"/>
    <property type="project" value="UniProtKB"/>
</dbReference>
<dbReference type="GO" id="GO:0005635">
    <property type="term" value="C:nuclear envelope"/>
    <property type="evidence" value="ECO:0000314"/>
    <property type="project" value="UniProtKB"/>
</dbReference>
<dbReference type="GO" id="GO:0005637">
    <property type="term" value="C:nuclear inner membrane"/>
    <property type="evidence" value="ECO:0007669"/>
    <property type="project" value="UniProtKB-SubCell"/>
</dbReference>
<dbReference type="GO" id="GO:0005640">
    <property type="term" value="C:nuclear outer membrane"/>
    <property type="evidence" value="ECO:0007669"/>
    <property type="project" value="UniProtKB-SubCell"/>
</dbReference>
<dbReference type="GO" id="GO:0014069">
    <property type="term" value="C:postsynaptic density"/>
    <property type="evidence" value="ECO:0000314"/>
    <property type="project" value="UniProtKB"/>
</dbReference>
<dbReference type="GO" id="GO:0098839">
    <property type="term" value="C:postsynaptic density membrane"/>
    <property type="evidence" value="ECO:0007669"/>
    <property type="project" value="UniProtKB-SubCell"/>
</dbReference>
<dbReference type="GO" id="GO:0004985">
    <property type="term" value="F:G protein-coupled opioid receptor activity"/>
    <property type="evidence" value="ECO:0007669"/>
    <property type="project" value="Ensembl"/>
</dbReference>
<dbReference type="GO" id="GO:0042802">
    <property type="term" value="F:identical protein binding"/>
    <property type="evidence" value="ECO:0000353"/>
    <property type="project" value="IntAct"/>
</dbReference>
<dbReference type="GO" id="GO:0006869">
    <property type="term" value="P:lipid transport"/>
    <property type="evidence" value="ECO:0007669"/>
    <property type="project" value="UniProtKB-KW"/>
</dbReference>
<dbReference type="GO" id="GO:0007399">
    <property type="term" value="P:nervous system development"/>
    <property type="evidence" value="ECO:0007669"/>
    <property type="project" value="Ensembl"/>
</dbReference>
<dbReference type="GO" id="GO:0070207">
    <property type="term" value="P:protein homotrimerization"/>
    <property type="evidence" value="ECO:0000353"/>
    <property type="project" value="UniProtKB"/>
</dbReference>
<dbReference type="GO" id="GO:0043523">
    <property type="term" value="P:regulation of neuron apoptotic process"/>
    <property type="evidence" value="ECO:0000315"/>
    <property type="project" value="UniProtKB"/>
</dbReference>
<dbReference type="GO" id="GO:0150052">
    <property type="term" value="P:regulation of postsynapse assembly"/>
    <property type="evidence" value="ECO:0007669"/>
    <property type="project" value="Ensembl"/>
</dbReference>
<dbReference type="InterPro" id="IPR006716">
    <property type="entry name" value="ERG2_sigma1_rcpt-like"/>
</dbReference>
<dbReference type="PANTHER" id="PTHR10868">
    <property type="entry name" value="SIGMA 1-TYPE OPIOID RECEPTOR-RELATED"/>
    <property type="match status" value="1"/>
</dbReference>
<dbReference type="PANTHER" id="PTHR10868:SF1">
    <property type="entry name" value="SIGMA NON-OPIOID INTRACELLULAR RECEPTOR 1"/>
    <property type="match status" value="1"/>
</dbReference>
<dbReference type="Pfam" id="PF04622">
    <property type="entry name" value="ERG2_Sigma1R"/>
    <property type="match status" value="1"/>
</dbReference>
<proteinExistence type="evidence at protein level"/>
<accession>Q99720</accession>
<accession>D3DRM7</accession>
<accession>O00673</accession>
<accession>O00725</accession>
<accession>Q0Z9W6</accession>
<accession>Q153Z1</accession>
<accession>Q2TSD1</accession>
<accession>Q53GN2</accession>
<accession>Q7Z653</accession>
<accession>Q8N7H3</accession>
<accession>Q9NYX0</accession>
<feature type="chain" id="PRO_0000268652" description="Sigma non-opioid intracellular receptor 1">
    <location>
        <begin position="1"/>
        <end position="223"/>
    </location>
</feature>
<feature type="topological domain" description="Lumenal" evidence="23">
    <location>
        <begin position="1"/>
        <end position="9"/>
    </location>
</feature>
<feature type="transmembrane region" description="Helical" evidence="13">
    <location>
        <begin position="10"/>
        <end position="30"/>
    </location>
</feature>
<feature type="topological domain" description="Cytoplasmic" evidence="23">
    <location>
        <begin position="31"/>
        <end position="223"/>
    </location>
</feature>
<feature type="region of interest" description="Targeting to endoplasmic reticulum-associated lipid droplets" evidence="1">
    <location>
        <begin position="2"/>
        <end position="8"/>
    </location>
</feature>
<feature type="region of interest" description="Important for ligand-binding" evidence="2">
    <location>
        <begin position="99"/>
        <end position="106"/>
    </location>
</feature>
<feature type="region of interest" description="C-terminal hydrophobic region" evidence="13">
    <location>
        <begin position="177"/>
        <end position="223"/>
    </location>
</feature>
<feature type="site" description="Important for ligand binding" evidence="5">
    <location>
        <position position="126"/>
    </location>
</feature>
<feature type="site" description="Important for ligand binding" evidence="5">
    <location>
        <position position="172"/>
    </location>
</feature>
<feature type="splice variant" id="VSP_021981" description="In isoform 5." evidence="17">
    <location>
        <begin position="31"/>
        <end position="52"/>
    </location>
</feature>
<feature type="splice variant" id="VSP_021982" description="In isoform 2." evidence="21">
    <location>
        <begin position="31"/>
        <end position="50"/>
    </location>
</feature>
<feature type="splice variant" id="VSP_021983" description="In isoform 5." evidence="17">
    <location>
        <begin position="63"/>
        <end position="76"/>
    </location>
</feature>
<feature type="splice variant" id="VSP_021984" description="In isoform 4." evidence="18 21">
    <original>YVLL</original>
    <variation>ALLG</variation>
    <location>
        <begin position="103"/>
        <end position="106"/>
    </location>
</feature>
<feature type="splice variant" id="VSP_021985" description="In isoform 4." evidence="18 21">
    <location>
        <begin position="107"/>
        <end position="223"/>
    </location>
</feature>
<feature type="splice variant" id="VSP_021986" description="In isoform 3." evidence="20 21">
    <location>
        <begin position="118"/>
        <end position="148"/>
    </location>
</feature>
<feature type="sequence variant" id="VAR_029750" description="In dbSNP:rs1800866." evidence="7">
    <original>Q</original>
    <variation>P</variation>
    <location>
        <position position="2"/>
    </location>
</feature>
<feature type="sequence variant" id="VAR_078816" description="In HMNR2; uncertain significance; dbSNP:rs140376902." evidence="14">
    <original>L</original>
    <variation>Q</variation>
    <location>
        <position position="65"/>
    </location>
</feature>
<feature type="sequence variant" id="VAR_067311" description="In ALS16; the mutation decreases the viability of motor neurons; the mutant protein is shifted to lower density membranes and forms detergent-resistant complexes; there is an almost 2-fold increase in apoptosis in response to stress compared to controls; dbSNP:rs387906829." evidence="9">
    <original>E</original>
    <variation>Q</variation>
    <location>
        <position position="102"/>
    </location>
</feature>
<feature type="sequence variant" id="VAR_029751" description="In dbSNP:rs192644838." evidence="7">
    <original>R</original>
    <variation>Q</variation>
    <location>
        <position position="211"/>
    </location>
</feature>
<feature type="mutagenesis site" description="No effect on ligand-binding." evidence="5">
    <original>E</original>
    <variation>G</variation>
    <location>
        <position position="123"/>
    </location>
</feature>
<feature type="mutagenesis site" description="Reduces ligand-binding. No effect on subcellular localization." evidence="5">
    <original>D</original>
    <variation>G</variation>
    <location>
        <position position="126"/>
    </location>
</feature>
<feature type="mutagenesis site" description="No effect on ligand-binding." evidence="5">
    <original>E</original>
    <variation>G</variation>
    <location>
        <position position="138"/>
    </location>
</feature>
<feature type="mutagenesis site" description="No effect on ligand-binding." evidence="5">
    <original>E</original>
    <variation>G</variation>
    <location>
        <position position="144"/>
    </location>
</feature>
<feature type="mutagenesis site" description="No effect on ligand-binding." evidence="5">
    <original>E</original>
    <variation>G</variation>
    <location>
        <position position="150"/>
    </location>
</feature>
<feature type="mutagenesis site" description="No effect on ligand-binding." evidence="5">
    <original>E</original>
    <variation>G</variation>
    <location>
        <position position="158"/>
    </location>
</feature>
<feature type="mutagenesis site" description="No effect on ligand-binding." evidence="5">
    <original>E</original>
    <variation>G</variation>
    <location>
        <position position="163"/>
    </location>
</feature>
<feature type="mutagenesis site" description="Reduces ligand-binding. No effect on subcellular localization." evidence="5">
    <original>E</original>
    <variation>G</variation>
    <location>
        <position position="172"/>
    </location>
</feature>
<feature type="mutagenesis site" description="No effect on ligand-binding." evidence="5">
    <original>D</original>
    <variation>G</variation>
    <location>
        <position position="188"/>
    </location>
</feature>
<feature type="mutagenesis site" description="No effect on ligand-binding." evidence="5">
    <original>D</original>
    <variation>G</variation>
    <location>
        <position position="195"/>
    </location>
</feature>
<feature type="mutagenesis site" description="No effect on ligand-binding." evidence="5">
    <original>E</original>
    <variation>G</variation>
    <location>
        <position position="213"/>
    </location>
</feature>
<feature type="sequence conflict" description="In Ref. 4; AAF64280." evidence="22" ref="4">
    <original>T</original>
    <variation>A</variation>
    <location>
        <position position="151"/>
    </location>
</feature>
<feature type="sequence conflict" description="In Ref. 6; ABG29111." evidence="22" ref="6">
    <original>T</original>
    <variation>A</variation>
    <location>
        <position position="168"/>
    </location>
</feature>
<feature type="sequence conflict" description="In Ref. 5; AAV33304." evidence="22" ref="5">
    <original>R</original>
    <variation>W</variation>
    <location>
        <position position="208"/>
    </location>
</feature>
<feature type="sequence conflict" description="In Ref. 6; ABG29111." evidence="22" ref="6">
    <original>L</original>
    <variation>I</variation>
    <location>
        <position position="218"/>
    </location>
</feature>
<feature type="sequence conflict" description="In Ref. 9; BAD96619." evidence="22" ref="9">
    <original>F</original>
    <variation>S</variation>
    <location>
        <position position="219"/>
    </location>
</feature>
<feature type="helix" evidence="25">
    <location>
        <begin position="1"/>
        <end position="3"/>
    </location>
</feature>
<feature type="helix" evidence="24">
    <location>
        <begin position="9"/>
        <end position="31"/>
    </location>
</feature>
<feature type="helix" evidence="24">
    <location>
        <begin position="39"/>
        <end position="49"/>
    </location>
</feature>
<feature type="helix" evidence="24">
    <location>
        <begin position="54"/>
        <end position="68"/>
    </location>
</feature>
<feature type="helix" evidence="24">
    <location>
        <begin position="76"/>
        <end position="78"/>
    </location>
</feature>
<feature type="strand" evidence="24">
    <location>
        <begin position="82"/>
        <end position="86"/>
    </location>
</feature>
<feature type="strand" evidence="24">
    <location>
        <begin position="89"/>
        <end position="98"/>
    </location>
</feature>
<feature type="strand" evidence="24">
    <location>
        <begin position="100"/>
        <end position="111"/>
    </location>
</feature>
<feature type="strand" evidence="24">
    <location>
        <begin position="113"/>
        <end position="116"/>
    </location>
</feature>
<feature type="strand" evidence="24">
    <location>
        <begin position="121"/>
        <end position="131"/>
    </location>
</feature>
<feature type="strand" evidence="24">
    <location>
        <begin position="133"/>
        <end position="137"/>
    </location>
</feature>
<feature type="strand" evidence="24">
    <location>
        <begin position="144"/>
        <end position="146"/>
    </location>
</feature>
<feature type="strand" evidence="24">
    <location>
        <begin position="151"/>
        <end position="154"/>
    </location>
</feature>
<feature type="strand" evidence="24">
    <location>
        <begin position="160"/>
        <end position="164"/>
    </location>
</feature>
<feature type="strand" evidence="24">
    <location>
        <begin position="166"/>
        <end position="176"/>
    </location>
</feature>
<feature type="helix" evidence="24">
    <location>
        <begin position="178"/>
        <end position="180"/>
    </location>
</feature>
<feature type="helix" evidence="24">
    <location>
        <begin position="182"/>
        <end position="185"/>
    </location>
</feature>
<feature type="helix" evidence="24">
    <location>
        <begin position="187"/>
        <end position="191"/>
    </location>
</feature>
<feature type="helix" evidence="24">
    <location>
        <begin position="196"/>
        <end position="218"/>
    </location>
</feature>
<sequence>MQWAVGRRWAWAALLLAVAAVLTQVVWLWLGTQSFVFQREEIAQLARQYAGLDHELAFSRLIVELRRLHPGHVLPDEELQWVFVNAGGWMGAMCLLHASLSEYVLLFGTALGSRGHSGRYWAEISDTIISGTFHQWREGTTKSEVFYPGETVVHGPGEATAVEWGPNTWMVEYGRGVIPSTLAFALADTVFSTQDFLTLFYTLRSYARGLRLELTTYLFGQDP</sequence>
<organism>
    <name type="scientific">Homo sapiens</name>
    <name type="common">Human</name>
    <dbReference type="NCBI Taxonomy" id="9606"/>
    <lineage>
        <taxon>Eukaryota</taxon>
        <taxon>Metazoa</taxon>
        <taxon>Chordata</taxon>
        <taxon>Craniata</taxon>
        <taxon>Vertebrata</taxon>
        <taxon>Euteleostomi</taxon>
        <taxon>Mammalia</taxon>
        <taxon>Eutheria</taxon>
        <taxon>Euarchontoglires</taxon>
        <taxon>Primates</taxon>
        <taxon>Haplorrhini</taxon>
        <taxon>Catarrhini</taxon>
        <taxon>Hominidae</taxon>
        <taxon>Homo</taxon>
    </lineage>
</organism>
<name>SGMR1_HUMAN</name>
<gene>
    <name type="primary">SIGMAR1</name>
    <name type="synonym">OPRS1</name>
    <name type="synonym">SRBP</name>
    <name type="ORF">AAG8</name>
</gene>
<protein>
    <recommendedName>
        <fullName>Sigma non-opioid intracellular receptor 1</fullName>
    </recommendedName>
    <alternativeName>
        <fullName>Aging-associated gene 8 protein</fullName>
    </alternativeName>
    <alternativeName>
        <fullName>SR31747-binding protein</fullName>
        <shortName>SR-BP</shortName>
    </alternativeName>
    <alternativeName>
        <fullName>Sigma 1-type opioid receptor</fullName>
        <shortName>SIG-1R</shortName>
        <shortName>Sigma1-receptor</shortName>
        <shortName>Sigma1R</shortName>
        <shortName>hSigmaR1</shortName>
    </alternativeName>
</protein>
<keyword id="KW-0002">3D-structure</keyword>
<keyword id="KW-0025">Alternative splicing</keyword>
<keyword id="KW-0036">Amyotrophic lateral sclerosis</keyword>
<keyword id="KW-0965">Cell junction</keyword>
<keyword id="KW-1003">Cell membrane</keyword>
<keyword id="KW-0966">Cell projection</keyword>
<keyword id="KW-0968">Cytoplasmic vesicle</keyword>
<keyword id="KW-0903">Direct protein sequencing</keyword>
<keyword id="KW-0225">Disease variant</keyword>
<keyword id="KW-0256">Endoplasmic reticulum</keyword>
<keyword id="KW-0551">Lipid droplet</keyword>
<keyword id="KW-0445">Lipid transport</keyword>
<keyword id="KW-0472">Membrane</keyword>
<keyword id="KW-0523">Neurodegeneration</keyword>
<keyword id="KW-0622">Neuropathy</keyword>
<keyword id="KW-0539">Nucleus</keyword>
<keyword id="KW-0628">Postsynaptic cell membrane</keyword>
<keyword id="KW-1267">Proteomics identification</keyword>
<keyword id="KW-0675">Receptor</keyword>
<keyword id="KW-1185">Reference proteome</keyword>
<keyword id="KW-0770">Synapse</keyword>
<keyword id="KW-0812">Transmembrane</keyword>
<keyword id="KW-1133">Transmembrane helix</keyword>
<keyword id="KW-0813">Transport</keyword>